<name>ARGC_PROMP</name>
<organism>
    <name type="scientific">Prochlorococcus marinus subsp. pastoris (strain CCMP1986 / NIES-2087 / MED4)</name>
    <dbReference type="NCBI Taxonomy" id="59919"/>
    <lineage>
        <taxon>Bacteria</taxon>
        <taxon>Bacillati</taxon>
        <taxon>Cyanobacteriota</taxon>
        <taxon>Cyanophyceae</taxon>
        <taxon>Synechococcales</taxon>
        <taxon>Prochlorococcaceae</taxon>
        <taxon>Prochlorococcus</taxon>
    </lineage>
</organism>
<evidence type="ECO:0000255" key="1">
    <source>
        <dbReference type="HAMAP-Rule" id="MF_00150"/>
    </source>
</evidence>
<sequence length="351" mass="38781">MNVAIVGATGYGGIQAVNLLKSNKNYKISYLGGNKSSGTKWSDNFPFINLESDNLIEKISIDRIADKANVALLCLPNGISSTLTRGLLEKGVKVIDLSADYRYKSLDQWKNIYSNEAKKYKRDDDDLCKEAVYGLPEINFNDISKARLIASPGCYPTSALIPLNPFLSQGIIDNEGIVIDSKSGTSGGGREPNQKSLFSECGDGLSAYGLINHRHTSEIEQIASFISGNDIELLFTPHLIPMTRGMHSTIYGRLRDPGLTSSDCRIILENYYRNYSHIRVLPVDIYPSTKWVKNTNEIHLSVKVDTRNGRVIILSVIDNLIKGQTGQAIQNLNLISGLPINNGLEMINHYP</sequence>
<keyword id="KW-0028">Amino-acid biosynthesis</keyword>
<keyword id="KW-0055">Arginine biosynthesis</keyword>
<keyword id="KW-0963">Cytoplasm</keyword>
<keyword id="KW-0521">NADP</keyword>
<keyword id="KW-0560">Oxidoreductase</keyword>
<feature type="chain" id="PRO_0000112436" description="N-acetyl-gamma-glutamyl-phosphate reductase">
    <location>
        <begin position="1"/>
        <end position="351"/>
    </location>
</feature>
<feature type="active site" evidence="1">
    <location>
        <position position="154"/>
    </location>
</feature>
<reference key="1">
    <citation type="journal article" date="2003" name="Nature">
        <title>Genome divergence in two Prochlorococcus ecotypes reflects oceanic niche differentiation.</title>
        <authorList>
            <person name="Rocap G."/>
            <person name="Larimer F.W."/>
            <person name="Lamerdin J.E."/>
            <person name="Malfatti S."/>
            <person name="Chain P."/>
            <person name="Ahlgren N.A."/>
            <person name="Arellano A."/>
            <person name="Coleman M."/>
            <person name="Hauser L."/>
            <person name="Hess W.R."/>
            <person name="Johnson Z.I."/>
            <person name="Land M.L."/>
            <person name="Lindell D."/>
            <person name="Post A.F."/>
            <person name="Regala W."/>
            <person name="Shah M."/>
            <person name="Shaw S.L."/>
            <person name="Steglich C."/>
            <person name="Sullivan M.B."/>
            <person name="Ting C.S."/>
            <person name="Tolonen A."/>
            <person name="Webb E.A."/>
            <person name="Zinser E.R."/>
            <person name="Chisholm S.W."/>
        </authorList>
    </citation>
    <scope>NUCLEOTIDE SEQUENCE [LARGE SCALE GENOMIC DNA]</scope>
    <source>
        <strain>CCMP1986 / NIES-2087 / MED4</strain>
    </source>
</reference>
<dbReference type="EC" id="1.2.1.38" evidence="1"/>
<dbReference type="EMBL" id="BX548174">
    <property type="protein sequence ID" value="CAE19351.1"/>
    <property type="molecule type" value="Genomic_DNA"/>
</dbReference>
<dbReference type="RefSeq" id="WP_011132525.1">
    <property type="nucleotide sequence ID" value="NC_005072.1"/>
</dbReference>
<dbReference type="SMR" id="Q7V1H9"/>
<dbReference type="STRING" id="59919.PMM0892"/>
<dbReference type="KEGG" id="pmm:PMM0892"/>
<dbReference type="eggNOG" id="COG0002">
    <property type="taxonomic scope" value="Bacteria"/>
</dbReference>
<dbReference type="HOGENOM" id="CLU_006384_0_1_3"/>
<dbReference type="OrthoDB" id="9801289at2"/>
<dbReference type="UniPathway" id="UPA00068">
    <property type="reaction ID" value="UER00108"/>
</dbReference>
<dbReference type="Proteomes" id="UP000001026">
    <property type="component" value="Chromosome"/>
</dbReference>
<dbReference type="GO" id="GO:0005737">
    <property type="term" value="C:cytoplasm"/>
    <property type="evidence" value="ECO:0007669"/>
    <property type="project" value="UniProtKB-SubCell"/>
</dbReference>
<dbReference type="GO" id="GO:0003942">
    <property type="term" value="F:N-acetyl-gamma-glutamyl-phosphate reductase activity"/>
    <property type="evidence" value="ECO:0007669"/>
    <property type="project" value="UniProtKB-UniRule"/>
</dbReference>
<dbReference type="GO" id="GO:0051287">
    <property type="term" value="F:NAD binding"/>
    <property type="evidence" value="ECO:0007669"/>
    <property type="project" value="InterPro"/>
</dbReference>
<dbReference type="GO" id="GO:0070401">
    <property type="term" value="F:NADP+ binding"/>
    <property type="evidence" value="ECO:0007669"/>
    <property type="project" value="InterPro"/>
</dbReference>
<dbReference type="GO" id="GO:0006526">
    <property type="term" value="P:L-arginine biosynthetic process"/>
    <property type="evidence" value="ECO:0007669"/>
    <property type="project" value="UniProtKB-UniRule"/>
</dbReference>
<dbReference type="CDD" id="cd23934">
    <property type="entry name" value="AGPR_1_C"/>
    <property type="match status" value="1"/>
</dbReference>
<dbReference type="CDD" id="cd17895">
    <property type="entry name" value="AGPR_1_N"/>
    <property type="match status" value="1"/>
</dbReference>
<dbReference type="Gene3D" id="3.30.360.10">
    <property type="entry name" value="Dihydrodipicolinate Reductase, domain 2"/>
    <property type="match status" value="1"/>
</dbReference>
<dbReference type="Gene3D" id="3.40.50.720">
    <property type="entry name" value="NAD(P)-binding Rossmann-like Domain"/>
    <property type="match status" value="1"/>
</dbReference>
<dbReference type="HAMAP" id="MF_00150">
    <property type="entry name" value="ArgC_type1"/>
    <property type="match status" value="1"/>
</dbReference>
<dbReference type="InterPro" id="IPR023013">
    <property type="entry name" value="AGPR_AS"/>
</dbReference>
<dbReference type="InterPro" id="IPR000706">
    <property type="entry name" value="AGPR_type-1"/>
</dbReference>
<dbReference type="InterPro" id="IPR036291">
    <property type="entry name" value="NAD(P)-bd_dom_sf"/>
</dbReference>
<dbReference type="InterPro" id="IPR050085">
    <property type="entry name" value="NAGSA_dehydrogenase"/>
</dbReference>
<dbReference type="InterPro" id="IPR000534">
    <property type="entry name" value="Semialdehyde_DH_NAD-bd"/>
</dbReference>
<dbReference type="NCBIfam" id="TIGR01850">
    <property type="entry name" value="argC"/>
    <property type="match status" value="1"/>
</dbReference>
<dbReference type="PANTHER" id="PTHR32338:SF10">
    <property type="entry name" value="N-ACETYL-GAMMA-GLUTAMYL-PHOSPHATE REDUCTASE, CHLOROPLASTIC-RELATED"/>
    <property type="match status" value="1"/>
</dbReference>
<dbReference type="PANTHER" id="PTHR32338">
    <property type="entry name" value="N-ACETYL-GAMMA-GLUTAMYL-PHOSPHATE REDUCTASE, CHLOROPLASTIC-RELATED-RELATED"/>
    <property type="match status" value="1"/>
</dbReference>
<dbReference type="Pfam" id="PF01118">
    <property type="entry name" value="Semialdhyde_dh"/>
    <property type="match status" value="1"/>
</dbReference>
<dbReference type="Pfam" id="PF22698">
    <property type="entry name" value="Semialdhyde_dhC_1"/>
    <property type="match status" value="1"/>
</dbReference>
<dbReference type="SMART" id="SM00859">
    <property type="entry name" value="Semialdhyde_dh"/>
    <property type="match status" value="1"/>
</dbReference>
<dbReference type="SUPFAM" id="SSF55347">
    <property type="entry name" value="Glyceraldehyde-3-phosphate dehydrogenase-like, C-terminal domain"/>
    <property type="match status" value="1"/>
</dbReference>
<dbReference type="SUPFAM" id="SSF51735">
    <property type="entry name" value="NAD(P)-binding Rossmann-fold domains"/>
    <property type="match status" value="1"/>
</dbReference>
<dbReference type="PROSITE" id="PS01224">
    <property type="entry name" value="ARGC"/>
    <property type="match status" value="1"/>
</dbReference>
<protein>
    <recommendedName>
        <fullName evidence="1">N-acetyl-gamma-glutamyl-phosphate reductase</fullName>
        <shortName evidence="1">AGPR</shortName>
        <ecNumber evidence="1">1.2.1.38</ecNumber>
    </recommendedName>
    <alternativeName>
        <fullName evidence="1">N-acetyl-glutamate semialdehyde dehydrogenase</fullName>
        <shortName evidence="1">NAGSA dehydrogenase</shortName>
    </alternativeName>
</protein>
<gene>
    <name evidence="1" type="primary">argC</name>
    <name type="ordered locus">PMM0892</name>
</gene>
<comment type="function">
    <text evidence="1">Catalyzes the NADPH-dependent reduction of N-acetyl-5-glutamyl phosphate to yield N-acetyl-L-glutamate 5-semialdehyde.</text>
</comment>
<comment type="catalytic activity">
    <reaction evidence="1">
        <text>N-acetyl-L-glutamate 5-semialdehyde + phosphate + NADP(+) = N-acetyl-L-glutamyl 5-phosphate + NADPH + H(+)</text>
        <dbReference type="Rhea" id="RHEA:21588"/>
        <dbReference type="ChEBI" id="CHEBI:15378"/>
        <dbReference type="ChEBI" id="CHEBI:29123"/>
        <dbReference type="ChEBI" id="CHEBI:43474"/>
        <dbReference type="ChEBI" id="CHEBI:57783"/>
        <dbReference type="ChEBI" id="CHEBI:57936"/>
        <dbReference type="ChEBI" id="CHEBI:58349"/>
        <dbReference type="EC" id="1.2.1.38"/>
    </reaction>
</comment>
<comment type="pathway">
    <text evidence="1">Amino-acid biosynthesis; L-arginine biosynthesis; N(2)-acetyl-L-ornithine from L-glutamate: step 3/4.</text>
</comment>
<comment type="subcellular location">
    <subcellularLocation>
        <location evidence="1">Cytoplasm</location>
    </subcellularLocation>
</comment>
<comment type="similarity">
    <text evidence="1">Belongs to the NAGSA dehydrogenase family. Type 1 subfamily.</text>
</comment>
<proteinExistence type="inferred from homology"/>
<accession>Q7V1H9</accession>